<accession>Q92QE7</accession>
<organism>
    <name type="scientific">Rhizobium meliloti (strain 1021)</name>
    <name type="common">Ensifer meliloti</name>
    <name type="synonym">Sinorhizobium meliloti</name>
    <dbReference type="NCBI Taxonomy" id="266834"/>
    <lineage>
        <taxon>Bacteria</taxon>
        <taxon>Pseudomonadati</taxon>
        <taxon>Pseudomonadota</taxon>
        <taxon>Alphaproteobacteria</taxon>
        <taxon>Hyphomicrobiales</taxon>
        <taxon>Rhizobiaceae</taxon>
        <taxon>Sinorhizobium/Ensifer group</taxon>
        <taxon>Sinorhizobium</taxon>
    </lineage>
</organism>
<name>MSRP_RHIME</name>
<protein>
    <recommendedName>
        <fullName evidence="1">Protein-methionine-sulfoxide reductase catalytic subunit MsrP</fullName>
        <ecNumber evidence="1">1.8.5.-</ecNumber>
    </recommendedName>
</protein>
<keyword id="KW-0479">Metal-binding</keyword>
<keyword id="KW-0500">Molybdenum</keyword>
<keyword id="KW-0560">Oxidoreductase</keyword>
<keyword id="KW-0574">Periplasm</keyword>
<keyword id="KW-1185">Reference proteome</keyword>
<keyword id="KW-0732">Signal</keyword>
<proteinExistence type="inferred from homology"/>
<feature type="signal peptide" description="Tat-type signal" evidence="1">
    <location>
        <begin position="1"/>
        <end position="46"/>
    </location>
</feature>
<feature type="chain" id="PRO_0000070695" description="Protein-methionine-sulfoxide reductase catalytic subunit MsrP" evidence="1">
    <location>
        <begin position="47"/>
        <end position="313"/>
    </location>
</feature>
<feature type="binding site" evidence="1">
    <location>
        <position position="70"/>
    </location>
    <ligand>
        <name>Mo-molybdopterin</name>
        <dbReference type="ChEBI" id="CHEBI:71302"/>
    </ligand>
</feature>
<feature type="binding site" evidence="1">
    <location>
        <begin position="73"/>
        <end position="74"/>
    </location>
    <ligand>
        <name>Mo-molybdopterin</name>
        <dbReference type="ChEBI" id="CHEBI:71302"/>
    </ligand>
</feature>
<feature type="binding site" evidence="1">
    <location>
        <position position="127"/>
    </location>
    <ligand>
        <name>Mo-molybdopterin</name>
        <dbReference type="ChEBI" id="CHEBI:71302"/>
    </ligand>
    <ligandPart>
        <name>Mo</name>
        <dbReference type="ChEBI" id="CHEBI:28685"/>
    </ligandPart>
</feature>
<feature type="binding site" evidence="1">
    <location>
        <position position="162"/>
    </location>
    <ligand>
        <name>Mo-molybdopterin</name>
        <dbReference type="ChEBI" id="CHEBI:71302"/>
    </ligand>
</feature>
<feature type="binding site" evidence="1">
    <location>
        <position position="212"/>
    </location>
    <ligand>
        <name>Mo-molybdopterin</name>
        <dbReference type="ChEBI" id="CHEBI:71302"/>
    </ligand>
</feature>
<feature type="binding site" evidence="1">
    <location>
        <position position="217"/>
    </location>
    <ligand>
        <name>Mo-molybdopterin</name>
        <dbReference type="ChEBI" id="CHEBI:71302"/>
    </ligand>
</feature>
<feature type="binding site" evidence="1">
    <location>
        <begin position="228"/>
        <end position="230"/>
    </location>
    <ligand>
        <name>Mo-molybdopterin</name>
        <dbReference type="ChEBI" id="CHEBI:71302"/>
    </ligand>
</feature>
<sequence length="313" mass="34687">MPSYRAPKIAAAEITPERFFLDRRTFIAAAAGSLALSVPKPSRAAALEASKSTYRADDPATPEKDATTYNNFYEFGTGKGDPAANSANFKPAPWTVKVDGLVGKPREFGLEELLAFPLEERIYRMRCVEAWSMVIPWIGFPLAALLDRVEPLGSAKYVAFETVVRPEEMPGQSGYFQPLEWPYREGLRLDEARHPLTILSVGLYGKTLPNQNGAPIRLVVPWKYGFKGIKSIVRISLTETPPPCTWNLAGPSEYGFYANVNPAVDHPRWSQATENRIGEGGFFGANRRDTLPFNGYAEDVASLYAGMDLRVNF</sequence>
<gene>
    <name evidence="1" type="primary">msrP</name>
    <name type="ordered locus">R01383</name>
    <name type="ORF">SMc01281</name>
</gene>
<reference key="1">
    <citation type="journal article" date="2001" name="Proc. Natl. Acad. Sci. U.S.A.">
        <title>Analysis of the chromosome sequence of the legume symbiont Sinorhizobium meliloti strain 1021.</title>
        <authorList>
            <person name="Capela D."/>
            <person name="Barloy-Hubler F."/>
            <person name="Gouzy J."/>
            <person name="Bothe G."/>
            <person name="Ampe F."/>
            <person name="Batut J."/>
            <person name="Boistard P."/>
            <person name="Becker A."/>
            <person name="Boutry M."/>
            <person name="Cadieu E."/>
            <person name="Dreano S."/>
            <person name="Gloux S."/>
            <person name="Godrie T."/>
            <person name="Goffeau A."/>
            <person name="Kahn D."/>
            <person name="Kiss E."/>
            <person name="Lelaure V."/>
            <person name="Masuy D."/>
            <person name="Pohl T."/>
            <person name="Portetelle D."/>
            <person name="Puehler A."/>
            <person name="Purnelle B."/>
            <person name="Ramsperger U."/>
            <person name="Renard C."/>
            <person name="Thebault P."/>
            <person name="Vandenbol M."/>
            <person name="Weidner S."/>
            <person name="Galibert F."/>
        </authorList>
    </citation>
    <scope>NUCLEOTIDE SEQUENCE [LARGE SCALE GENOMIC DNA]</scope>
    <source>
        <strain>1021</strain>
    </source>
</reference>
<reference key="2">
    <citation type="journal article" date="2001" name="Science">
        <title>The composite genome of the legume symbiont Sinorhizobium meliloti.</title>
        <authorList>
            <person name="Galibert F."/>
            <person name="Finan T.M."/>
            <person name="Long S.R."/>
            <person name="Puehler A."/>
            <person name="Abola P."/>
            <person name="Ampe F."/>
            <person name="Barloy-Hubler F."/>
            <person name="Barnett M.J."/>
            <person name="Becker A."/>
            <person name="Boistard P."/>
            <person name="Bothe G."/>
            <person name="Boutry M."/>
            <person name="Bowser L."/>
            <person name="Buhrmester J."/>
            <person name="Cadieu E."/>
            <person name="Capela D."/>
            <person name="Chain P."/>
            <person name="Cowie A."/>
            <person name="Davis R.W."/>
            <person name="Dreano S."/>
            <person name="Federspiel N.A."/>
            <person name="Fisher R.F."/>
            <person name="Gloux S."/>
            <person name="Godrie T."/>
            <person name="Goffeau A."/>
            <person name="Golding B."/>
            <person name="Gouzy J."/>
            <person name="Gurjal M."/>
            <person name="Hernandez-Lucas I."/>
            <person name="Hong A."/>
            <person name="Huizar L."/>
            <person name="Hyman R.W."/>
            <person name="Jones T."/>
            <person name="Kahn D."/>
            <person name="Kahn M.L."/>
            <person name="Kalman S."/>
            <person name="Keating D.H."/>
            <person name="Kiss E."/>
            <person name="Komp C."/>
            <person name="Lelaure V."/>
            <person name="Masuy D."/>
            <person name="Palm C."/>
            <person name="Peck M.C."/>
            <person name="Pohl T.M."/>
            <person name="Portetelle D."/>
            <person name="Purnelle B."/>
            <person name="Ramsperger U."/>
            <person name="Surzycki R."/>
            <person name="Thebault P."/>
            <person name="Vandenbol M."/>
            <person name="Vorhoelter F.J."/>
            <person name="Weidner S."/>
            <person name="Wells D.H."/>
            <person name="Wong K."/>
            <person name="Yeh K.-C."/>
            <person name="Batut J."/>
        </authorList>
    </citation>
    <scope>NUCLEOTIDE SEQUENCE [LARGE SCALE GENOMIC DNA]</scope>
    <source>
        <strain>1021</strain>
    </source>
</reference>
<dbReference type="EC" id="1.8.5.-" evidence="1"/>
<dbReference type="EMBL" id="AL591688">
    <property type="protein sequence ID" value="CAC45962.1"/>
    <property type="molecule type" value="Genomic_DNA"/>
</dbReference>
<dbReference type="RefSeq" id="NP_385489.1">
    <property type="nucleotide sequence ID" value="NC_003047.1"/>
</dbReference>
<dbReference type="RefSeq" id="WP_010969199.1">
    <property type="nucleotide sequence ID" value="NC_003047.1"/>
</dbReference>
<dbReference type="SMR" id="Q92QE7"/>
<dbReference type="EnsemblBacteria" id="CAC45962">
    <property type="protein sequence ID" value="CAC45962"/>
    <property type="gene ID" value="SMc01281"/>
</dbReference>
<dbReference type="KEGG" id="sme:SMc01281"/>
<dbReference type="PATRIC" id="fig|266834.11.peg.2800"/>
<dbReference type="eggNOG" id="COG2041">
    <property type="taxonomic scope" value="Bacteria"/>
</dbReference>
<dbReference type="HOGENOM" id="CLU_045520_0_0_5"/>
<dbReference type="OrthoDB" id="9795587at2"/>
<dbReference type="Proteomes" id="UP000001976">
    <property type="component" value="Chromosome"/>
</dbReference>
<dbReference type="GO" id="GO:0042597">
    <property type="term" value="C:periplasmic space"/>
    <property type="evidence" value="ECO:0007669"/>
    <property type="project" value="UniProtKB-SubCell"/>
</dbReference>
<dbReference type="GO" id="GO:0046872">
    <property type="term" value="F:metal ion binding"/>
    <property type="evidence" value="ECO:0007669"/>
    <property type="project" value="UniProtKB-KW"/>
</dbReference>
<dbReference type="GO" id="GO:0043546">
    <property type="term" value="F:molybdopterin cofactor binding"/>
    <property type="evidence" value="ECO:0007669"/>
    <property type="project" value="UniProtKB-UniRule"/>
</dbReference>
<dbReference type="GO" id="GO:0016672">
    <property type="term" value="F:oxidoreductase activity, acting on a sulfur group of donors, quinone or similar compound as acceptor"/>
    <property type="evidence" value="ECO:0007669"/>
    <property type="project" value="UniProtKB-UniRule"/>
</dbReference>
<dbReference type="GO" id="GO:0030091">
    <property type="term" value="P:protein repair"/>
    <property type="evidence" value="ECO:0007669"/>
    <property type="project" value="UniProtKB-UniRule"/>
</dbReference>
<dbReference type="Gene3D" id="3.90.420.10">
    <property type="entry name" value="Oxidoreductase, molybdopterin-binding domain"/>
    <property type="match status" value="1"/>
</dbReference>
<dbReference type="HAMAP" id="MF_01206">
    <property type="entry name" value="MsrP"/>
    <property type="match status" value="1"/>
</dbReference>
<dbReference type="InterPro" id="IPR022867">
    <property type="entry name" value="MsrP"/>
</dbReference>
<dbReference type="InterPro" id="IPR000572">
    <property type="entry name" value="OxRdtase_Mopterin-bd_dom"/>
</dbReference>
<dbReference type="InterPro" id="IPR036374">
    <property type="entry name" value="OxRdtase_Mopterin-bd_sf"/>
</dbReference>
<dbReference type="NCBIfam" id="NF003767">
    <property type="entry name" value="PRK05363.1"/>
    <property type="match status" value="1"/>
</dbReference>
<dbReference type="PANTHER" id="PTHR43032">
    <property type="entry name" value="PROTEIN-METHIONINE-SULFOXIDE REDUCTASE"/>
    <property type="match status" value="1"/>
</dbReference>
<dbReference type="PANTHER" id="PTHR43032:SF3">
    <property type="entry name" value="PROTEIN-METHIONINE-SULFOXIDE REDUCTASE CATALYTIC SUBUNIT MSRP"/>
    <property type="match status" value="1"/>
</dbReference>
<dbReference type="Pfam" id="PF00174">
    <property type="entry name" value="Oxidored_molyb"/>
    <property type="match status" value="1"/>
</dbReference>
<dbReference type="SUPFAM" id="SSF56524">
    <property type="entry name" value="Oxidoreductase molybdopterin-binding domain"/>
    <property type="match status" value="1"/>
</dbReference>
<comment type="function">
    <text evidence="1">Part of the MsrPQ system that repairs oxidized periplasmic proteins containing methionine sulfoxide residues (Met-O), using respiratory chain electrons. Thus protects these proteins from oxidative-stress damage caused by reactive species of oxygen and chlorine generated by the host defense mechanisms. MsrPQ is essential for the maintenance of envelope integrity under bleach stress, rescuing a wide series of structurally unrelated periplasmic proteins from methionine oxidation. The catalytic subunit MsrP is non-stereospecific, being able to reduce both (R-) and (S-) diastereoisomers of methionine sulfoxide.</text>
</comment>
<comment type="catalytic activity">
    <reaction evidence="1">
        <text>L-methionyl-[protein] + a quinone + H2O = L-methionyl-(S)-S-oxide-[protein] + a quinol</text>
        <dbReference type="Rhea" id="RHEA:51292"/>
        <dbReference type="Rhea" id="RHEA-COMP:12313"/>
        <dbReference type="Rhea" id="RHEA-COMP:12315"/>
        <dbReference type="ChEBI" id="CHEBI:15377"/>
        <dbReference type="ChEBI" id="CHEBI:16044"/>
        <dbReference type="ChEBI" id="CHEBI:24646"/>
        <dbReference type="ChEBI" id="CHEBI:44120"/>
        <dbReference type="ChEBI" id="CHEBI:132124"/>
    </reaction>
</comment>
<comment type="catalytic activity">
    <reaction evidence="1">
        <text>L-methionyl-[protein] + a quinone + H2O = L-methionyl-(R)-S-oxide-[protein] + a quinol</text>
        <dbReference type="Rhea" id="RHEA:51296"/>
        <dbReference type="Rhea" id="RHEA-COMP:12313"/>
        <dbReference type="Rhea" id="RHEA-COMP:12314"/>
        <dbReference type="ChEBI" id="CHEBI:15377"/>
        <dbReference type="ChEBI" id="CHEBI:16044"/>
        <dbReference type="ChEBI" id="CHEBI:24646"/>
        <dbReference type="ChEBI" id="CHEBI:45764"/>
        <dbReference type="ChEBI" id="CHEBI:132124"/>
    </reaction>
</comment>
<comment type="cofactor">
    <cofactor evidence="1">
        <name>Mo-molybdopterin</name>
        <dbReference type="ChEBI" id="CHEBI:71302"/>
    </cofactor>
    <text evidence="1">Binds 1 Mo-molybdopterin (Mo-MPT) cofactor per subunit.</text>
</comment>
<comment type="subunit">
    <text evidence="1">Heterodimer of a catalytic subunit (MsrP) and a heme-binding subunit (MsrQ).</text>
</comment>
<comment type="subcellular location">
    <subcellularLocation>
        <location evidence="1">Periplasm</location>
    </subcellularLocation>
    <text evidence="1">Is attached to the inner membrane when interacting with the MsrQ subunit.</text>
</comment>
<comment type="PTM">
    <text evidence="1">Predicted to be exported by the Tat system. The position of the signal peptide cleavage has not been experimentally proven.</text>
</comment>
<comment type="similarity">
    <text evidence="1">Belongs to the MsrP family.</text>
</comment>
<evidence type="ECO:0000255" key="1">
    <source>
        <dbReference type="HAMAP-Rule" id="MF_01206"/>
    </source>
</evidence>